<dbReference type="EC" id="2.1.1.68"/>
<dbReference type="EMBL" id="AJ439740">
    <property type="protein sequence ID" value="CAD29457.1"/>
    <property type="molecule type" value="mRNA"/>
</dbReference>
<dbReference type="SMR" id="Q8GU25"/>
<dbReference type="UniPathway" id="UPA00711"/>
<dbReference type="GO" id="GO:0047763">
    <property type="term" value="F:caffeate O-methyltransferase activity"/>
    <property type="evidence" value="ECO:0007669"/>
    <property type="project" value="UniProtKB-EC"/>
</dbReference>
<dbReference type="GO" id="GO:0046983">
    <property type="term" value="F:protein dimerization activity"/>
    <property type="evidence" value="ECO:0007669"/>
    <property type="project" value="InterPro"/>
</dbReference>
<dbReference type="GO" id="GO:0009809">
    <property type="term" value="P:lignin biosynthetic process"/>
    <property type="evidence" value="ECO:0007669"/>
    <property type="project" value="UniProtKB-KW"/>
</dbReference>
<dbReference type="GO" id="GO:0032259">
    <property type="term" value="P:methylation"/>
    <property type="evidence" value="ECO:0007669"/>
    <property type="project" value="UniProtKB-KW"/>
</dbReference>
<dbReference type="CDD" id="cd02440">
    <property type="entry name" value="AdoMet_MTases"/>
    <property type="match status" value="1"/>
</dbReference>
<dbReference type="FunFam" id="1.10.10.10:FF:000357">
    <property type="entry name" value="Caffeic acid 3-O-methyltransferase"/>
    <property type="match status" value="1"/>
</dbReference>
<dbReference type="FunFam" id="3.40.50.150:FF:000061">
    <property type="entry name" value="Caffeic acid O-methyltransferase"/>
    <property type="match status" value="1"/>
</dbReference>
<dbReference type="Gene3D" id="3.40.50.150">
    <property type="entry name" value="Vaccinia Virus protein VP39"/>
    <property type="match status" value="1"/>
</dbReference>
<dbReference type="Gene3D" id="1.10.10.10">
    <property type="entry name" value="Winged helix-like DNA-binding domain superfamily/Winged helix DNA-binding domain"/>
    <property type="match status" value="1"/>
</dbReference>
<dbReference type="InterPro" id="IPR016461">
    <property type="entry name" value="COMT-like"/>
</dbReference>
<dbReference type="InterPro" id="IPR001077">
    <property type="entry name" value="O_MeTrfase_dom"/>
</dbReference>
<dbReference type="InterPro" id="IPR012967">
    <property type="entry name" value="Plant_O-MeTrfase_dimerisation"/>
</dbReference>
<dbReference type="InterPro" id="IPR029063">
    <property type="entry name" value="SAM-dependent_MTases_sf"/>
</dbReference>
<dbReference type="InterPro" id="IPR036388">
    <property type="entry name" value="WH-like_DNA-bd_sf"/>
</dbReference>
<dbReference type="InterPro" id="IPR036390">
    <property type="entry name" value="WH_DNA-bd_sf"/>
</dbReference>
<dbReference type="PANTHER" id="PTHR11746">
    <property type="entry name" value="O-METHYLTRANSFERASE"/>
    <property type="match status" value="1"/>
</dbReference>
<dbReference type="Pfam" id="PF08100">
    <property type="entry name" value="Dimerisation"/>
    <property type="match status" value="1"/>
</dbReference>
<dbReference type="Pfam" id="PF00891">
    <property type="entry name" value="Methyltransf_2"/>
    <property type="match status" value="1"/>
</dbReference>
<dbReference type="PIRSF" id="PIRSF005739">
    <property type="entry name" value="O-mtase"/>
    <property type="match status" value="1"/>
</dbReference>
<dbReference type="SUPFAM" id="SSF53335">
    <property type="entry name" value="S-adenosyl-L-methionine-dependent methyltransferases"/>
    <property type="match status" value="1"/>
</dbReference>
<dbReference type="SUPFAM" id="SSF46785">
    <property type="entry name" value="Winged helix' DNA-binding domain"/>
    <property type="match status" value="1"/>
</dbReference>
<dbReference type="PROSITE" id="PS51683">
    <property type="entry name" value="SAM_OMT_II"/>
    <property type="match status" value="1"/>
</dbReference>
<evidence type="ECO:0000250" key="1"/>
<evidence type="ECO:0000255" key="2">
    <source>
        <dbReference type="PROSITE-ProRule" id="PRU01020"/>
    </source>
</evidence>
<keyword id="KW-0438">Lignin biosynthesis</keyword>
<keyword id="KW-0489">Methyltransferase</keyword>
<keyword id="KW-0949">S-adenosyl-L-methionine</keyword>
<keyword id="KW-0808">Transferase</keyword>
<reference key="1">
    <citation type="submission" date="2002-03" db="EMBL/GenBank/DDBJ databases">
        <title>Characterisation of a novel O-methyltransferase involved in the biosynthesis of 3,5-dimethoxytoluene and 1,3,5-trimethoxybenzene, two major scent components of rose flowers.</title>
        <authorList>
            <person name="Cock J.M."/>
            <person name="Scalliet G."/>
            <person name="Hugueney P."/>
        </authorList>
    </citation>
    <scope>NUCLEOTIDE SEQUENCE [MRNA]</scope>
    <source>
        <strain>cv. Old Blush</strain>
    </source>
</reference>
<gene>
    <name type="primary">COMT1</name>
</gene>
<proteinExistence type="evidence at transcript level"/>
<feature type="chain" id="PRO_0000063212" description="Caffeic acid 3-O-methyltransferase">
    <location>
        <begin position="1"/>
        <end position="365"/>
    </location>
</feature>
<feature type="region of interest" description="Substrate binding" evidence="1">
    <location>
        <begin position="162"/>
        <end position="180"/>
    </location>
</feature>
<feature type="active site" description="Proton acceptor" evidence="2">
    <location>
        <position position="269"/>
    </location>
</feature>
<feature type="binding site" evidence="1">
    <location>
        <begin position="130"/>
        <end position="136"/>
    </location>
    <ligand>
        <name>substrate</name>
    </ligand>
</feature>
<feature type="binding site" evidence="2">
    <location>
        <position position="208"/>
    </location>
    <ligand>
        <name>S-adenosyl-L-methionine</name>
        <dbReference type="ChEBI" id="CHEBI:59789"/>
    </ligand>
</feature>
<feature type="binding site" evidence="2">
    <location>
        <position position="231"/>
    </location>
    <ligand>
        <name>S-adenosyl-L-methionine</name>
        <dbReference type="ChEBI" id="CHEBI:59789"/>
    </ligand>
</feature>
<feature type="binding site" evidence="2">
    <location>
        <position position="251"/>
    </location>
    <ligand>
        <name>S-adenosyl-L-methionine</name>
        <dbReference type="ChEBI" id="CHEBI:59789"/>
    </ligand>
</feature>
<feature type="binding site" evidence="2">
    <location>
        <position position="252"/>
    </location>
    <ligand>
        <name>S-adenosyl-L-methionine</name>
        <dbReference type="ChEBI" id="CHEBI:59789"/>
    </ligand>
</feature>
<feature type="binding site" evidence="2">
    <location>
        <position position="265"/>
    </location>
    <ligand>
        <name>S-adenosyl-L-methionine</name>
        <dbReference type="ChEBI" id="CHEBI:59789"/>
    </ligand>
</feature>
<name>COMT1_ROSCH</name>
<comment type="function">
    <text>Catalyzes the conversion of caffeic acid to ferulic acid and of 5-hydroxyferulic acid to sinapic acid. The resulting products may subsequently be converted to the corresponding alcohols that are incorporated into lignins.</text>
</comment>
<comment type="catalytic activity">
    <reaction>
        <text>(E)-caffeate + S-adenosyl-L-methionine = (E)-ferulate + S-adenosyl-L-homocysteine + H(+)</text>
        <dbReference type="Rhea" id="RHEA:20225"/>
        <dbReference type="ChEBI" id="CHEBI:15378"/>
        <dbReference type="ChEBI" id="CHEBI:29749"/>
        <dbReference type="ChEBI" id="CHEBI:57770"/>
        <dbReference type="ChEBI" id="CHEBI:57856"/>
        <dbReference type="ChEBI" id="CHEBI:59789"/>
        <dbReference type="EC" id="2.1.1.68"/>
    </reaction>
</comment>
<comment type="pathway">
    <text>Aromatic compound metabolism; phenylpropanoid biosynthesis.</text>
</comment>
<comment type="subunit">
    <text evidence="1">Homodimer.</text>
</comment>
<comment type="similarity">
    <text evidence="2">Belongs to the class I-like SAM-binding methyltransferase superfamily. Cation-independent O-methyltransferase family. COMT subfamily.</text>
</comment>
<protein>
    <recommendedName>
        <fullName>Caffeic acid 3-O-methyltransferase</fullName>
        <shortName>CAOMT</shortName>
        <shortName>COMT</shortName>
        <ecNumber>2.1.1.68</ecNumber>
    </recommendedName>
    <alternativeName>
        <fullName>S-adenosysl-L-methionine:caffeic acid 3-O-methyltransferase</fullName>
    </alternativeName>
</protein>
<accession>Q8GU25</accession>
<organism>
    <name type="scientific">Rosa chinensis</name>
    <name type="common">China rose</name>
    <dbReference type="NCBI Taxonomy" id="74649"/>
    <lineage>
        <taxon>Eukaryota</taxon>
        <taxon>Viridiplantae</taxon>
        <taxon>Streptophyta</taxon>
        <taxon>Embryophyta</taxon>
        <taxon>Tracheophyta</taxon>
        <taxon>Spermatophyta</taxon>
        <taxon>Magnoliopsida</taxon>
        <taxon>eudicotyledons</taxon>
        <taxon>Gunneridae</taxon>
        <taxon>Pentapetalae</taxon>
        <taxon>rosids</taxon>
        <taxon>fabids</taxon>
        <taxon>Rosales</taxon>
        <taxon>Rosaceae</taxon>
        <taxon>Rosoideae</taxon>
        <taxon>Rosoideae incertae sedis</taxon>
        <taxon>Rosa</taxon>
    </lineage>
</organism>
<sequence>MGSTGETQMTPTQVSDEEANLFAMQLASASVLPMVLKAAIELDLLEIMAKAGPGAFLSPNDLASQLPTKNPEAPVMLDRMLRLLASYSILTYSLRTLPDGKVERLYGLGPVCKFLTKNEDGVSIAALCLMNQDKVLVESWYHLKDAVLDGGIPFNKAYGMTAFDYHGTDPRFNKVFNKGMADHSTITMKKILETYKGFEGLTSIVDVGGGTGAVVNMIVSKYPSIKGINFDLPHVIEDAPQYPGVQHVGGDMFVSVPKGDAIFMKWICHDWSDEHCLKFLKNCYAALPDNGKVILGECILPVAPDTSLATKGVVHIDVVMLAHNPGGKERTEQEFEALAKGSGFQGIRVACNAFNTYVIEFLKKI</sequence>